<sequence>MAQVINTNYLSLVTQNNLNRSQSALGNAIERLSSGMRINSAKDDAAGQAIANRFTSNINGLTQASRNANDGISVSQTTEGALNEINNNLQRIRELTVQAKNGTNSNSDINSIQNEVNQRLDEINRVSEQTQFNGVKVLSGEKSKMTIQVGTNDNEVIEFNLDKIDNDTLGVASDKLFDAKTEKKGVTAAGDAIDANALGISGSKKYVTGISVKEYKVDGKVSSDKVVLNDGSDDYIVSKSDFTLKSGTTTGEVEFTGSKTTKFTADAGKDVKVLNVKDDALATLDNAISKVDESRSKLGAIQNRFQSTINNLNNTVNNLSASRSRILDADYATEVSNMSKNQILQQAGTAVLAQANQVPQTVLSLLR</sequence>
<proteinExistence type="evidence at transcript level"/>
<reference key="1">
    <citation type="journal article" date="1994" name="Gene">
        <title>Sequence and genetic analysis of multiple flagellin-encoding genes from Proteus mirabilis.</title>
        <authorList>
            <person name="Belas R."/>
            <person name="Flaherty D."/>
        </authorList>
    </citation>
    <scope>NUCLEOTIDE SEQUENCE [GENOMIC DNA]</scope>
    <source>
        <strain>BB2000</strain>
    </source>
</reference>
<accession>P42273</accession>
<dbReference type="EMBL" id="AF221596">
    <property type="protein sequence ID" value="AAA62397.1"/>
    <property type="molecule type" value="Genomic_DNA"/>
</dbReference>
<dbReference type="PIR" id="JC2560">
    <property type="entry name" value="JC2560"/>
</dbReference>
<dbReference type="RefSeq" id="WP_020945864.1">
    <property type="nucleotide sequence ID" value="NZ_VKHV01000013.1"/>
</dbReference>
<dbReference type="SMR" id="P42273"/>
<dbReference type="STRING" id="584.AOUC001_07465"/>
<dbReference type="GO" id="GO:0009288">
    <property type="term" value="C:bacterial-type flagellum"/>
    <property type="evidence" value="ECO:0007669"/>
    <property type="project" value="UniProtKB-SubCell"/>
</dbReference>
<dbReference type="GO" id="GO:0005576">
    <property type="term" value="C:extracellular region"/>
    <property type="evidence" value="ECO:0007669"/>
    <property type="project" value="UniProtKB-SubCell"/>
</dbReference>
<dbReference type="GO" id="GO:0005198">
    <property type="term" value="F:structural molecule activity"/>
    <property type="evidence" value="ECO:0007669"/>
    <property type="project" value="InterPro"/>
</dbReference>
<dbReference type="Gene3D" id="6.10.280.190">
    <property type="match status" value="1"/>
</dbReference>
<dbReference type="Gene3D" id="2.30.220.10">
    <property type="entry name" value="f41 fragment of flagellin, C-terminal domain"/>
    <property type="match status" value="1"/>
</dbReference>
<dbReference type="Gene3D" id="2.170.280.10">
    <property type="entry name" value="f41 fragment of flagellin, middle domain"/>
    <property type="match status" value="1"/>
</dbReference>
<dbReference type="Gene3D" id="1.20.1330.10">
    <property type="entry name" value="f41 fragment of flagellin, N-terminal domain"/>
    <property type="match status" value="1"/>
</dbReference>
<dbReference type="Gene3D" id="6.10.10.10">
    <property type="entry name" value="Flagellar export chaperone, C-terminal domain"/>
    <property type="match status" value="1"/>
</dbReference>
<dbReference type="InterPro" id="IPR001492">
    <property type="entry name" value="Flagellin"/>
</dbReference>
<dbReference type="InterPro" id="IPR046358">
    <property type="entry name" value="Flagellin_C"/>
</dbReference>
<dbReference type="InterPro" id="IPR042187">
    <property type="entry name" value="Flagellin_C_sub2"/>
</dbReference>
<dbReference type="InterPro" id="IPR001029">
    <property type="entry name" value="Flagellin_N"/>
</dbReference>
<dbReference type="NCBIfam" id="NF005294">
    <property type="entry name" value="PRK06819.1"/>
    <property type="match status" value="1"/>
</dbReference>
<dbReference type="PANTHER" id="PTHR42792">
    <property type="entry name" value="FLAGELLIN"/>
    <property type="match status" value="1"/>
</dbReference>
<dbReference type="PANTHER" id="PTHR42792:SF2">
    <property type="entry name" value="FLAGELLIN"/>
    <property type="match status" value="1"/>
</dbReference>
<dbReference type="Pfam" id="PF00700">
    <property type="entry name" value="Flagellin_C"/>
    <property type="match status" value="1"/>
</dbReference>
<dbReference type="Pfam" id="PF00669">
    <property type="entry name" value="Flagellin_N"/>
    <property type="match status" value="1"/>
</dbReference>
<dbReference type="PRINTS" id="PR00207">
    <property type="entry name" value="FLAGELLIN"/>
</dbReference>
<dbReference type="SUPFAM" id="SSF64518">
    <property type="entry name" value="Phase 1 flagellin"/>
    <property type="match status" value="1"/>
</dbReference>
<protein>
    <recommendedName>
        <fullName>Flagellin 2</fullName>
    </recommendedName>
</protein>
<feature type="chain" id="PRO_0000182562" description="Flagellin 2">
    <location>
        <begin position="1"/>
        <end position="367"/>
    </location>
</feature>
<evidence type="ECO:0000305" key="1"/>
<gene>
    <name type="primary">fliC2</name>
</gene>
<name>FLIC2_PROMI</name>
<comment type="function">
    <text>Flagellin is the subunit protein which polymerizes to form the filaments of bacterial flagella.</text>
</comment>
<comment type="subcellular location">
    <subcellularLocation>
        <location>Secreted</location>
    </subcellularLocation>
    <subcellularLocation>
        <location>Bacterial flagellum</location>
    </subcellularLocation>
</comment>
<comment type="induction">
    <text>Although swimmer cells have only a few flagella, the elongated swarmer cells are profusely covered by thousands of new flagella synthesized specifically in response to growth on surfaces or in highly viscous liquids.</text>
</comment>
<comment type="similarity">
    <text evidence="1">Belongs to the bacterial flagellin family.</text>
</comment>
<organism>
    <name type="scientific">Proteus mirabilis</name>
    <dbReference type="NCBI Taxonomy" id="584"/>
    <lineage>
        <taxon>Bacteria</taxon>
        <taxon>Pseudomonadati</taxon>
        <taxon>Pseudomonadota</taxon>
        <taxon>Gammaproteobacteria</taxon>
        <taxon>Enterobacterales</taxon>
        <taxon>Morganellaceae</taxon>
        <taxon>Proteus</taxon>
    </lineage>
</organism>
<keyword id="KW-0975">Bacterial flagellum</keyword>
<keyword id="KW-0964">Secreted</keyword>